<organism>
    <name type="scientific">Staphylococcus aureus (strain JH1)</name>
    <dbReference type="NCBI Taxonomy" id="359787"/>
    <lineage>
        <taxon>Bacteria</taxon>
        <taxon>Bacillati</taxon>
        <taxon>Bacillota</taxon>
        <taxon>Bacilli</taxon>
        <taxon>Bacillales</taxon>
        <taxon>Staphylococcaceae</taxon>
        <taxon>Staphylococcus</taxon>
    </lineage>
</organism>
<reference key="1">
    <citation type="submission" date="2007-06" db="EMBL/GenBank/DDBJ databases">
        <title>Complete sequence of chromosome of Staphylococcus aureus subsp. aureus JH1.</title>
        <authorList>
            <consortium name="US DOE Joint Genome Institute"/>
            <person name="Copeland A."/>
            <person name="Lucas S."/>
            <person name="Lapidus A."/>
            <person name="Barry K."/>
            <person name="Detter J.C."/>
            <person name="Glavina del Rio T."/>
            <person name="Hammon N."/>
            <person name="Israni S."/>
            <person name="Dalin E."/>
            <person name="Tice H."/>
            <person name="Pitluck S."/>
            <person name="Chain P."/>
            <person name="Malfatti S."/>
            <person name="Shin M."/>
            <person name="Vergez L."/>
            <person name="Schmutz J."/>
            <person name="Larimer F."/>
            <person name="Land M."/>
            <person name="Hauser L."/>
            <person name="Kyrpides N."/>
            <person name="Ivanova N."/>
            <person name="Tomasz A."/>
            <person name="Richardson P."/>
        </authorList>
    </citation>
    <scope>NUCLEOTIDE SEQUENCE [LARGE SCALE GENOMIC DNA]</scope>
    <source>
        <strain>JH1</strain>
    </source>
</reference>
<comment type="function">
    <text evidence="1">Forms part of the ribosomal stalk which helps the ribosome interact with GTP-bound translation factors.</text>
</comment>
<comment type="subunit">
    <text evidence="1">Part of the ribosomal stalk of the 50S ribosomal subunit. Interacts with L10 and the large rRNA to form the base of the stalk. L10 forms an elongated spine to which L12 dimers bind in a sequential fashion forming a multimeric L10(L12)X complex.</text>
</comment>
<comment type="PTM">
    <text evidence="1">One or more lysine residues are methylated.</text>
</comment>
<comment type="similarity">
    <text evidence="1">Belongs to the universal ribosomal protein uL11 family.</text>
</comment>
<evidence type="ECO:0000255" key="1">
    <source>
        <dbReference type="HAMAP-Rule" id="MF_00736"/>
    </source>
</evidence>
<evidence type="ECO:0000305" key="2"/>
<dbReference type="EMBL" id="CP000736">
    <property type="protein sequence ID" value="ABR51432.1"/>
    <property type="molecule type" value="Genomic_DNA"/>
</dbReference>
<dbReference type="SMR" id="A6TZ14"/>
<dbReference type="KEGG" id="sah:SaurJH1_0574"/>
<dbReference type="HOGENOM" id="CLU_074237_2_1_9"/>
<dbReference type="GO" id="GO:0022625">
    <property type="term" value="C:cytosolic large ribosomal subunit"/>
    <property type="evidence" value="ECO:0007669"/>
    <property type="project" value="TreeGrafter"/>
</dbReference>
<dbReference type="GO" id="GO:0070180">
    <property type="term" value="F:large ribosomal subunit rRNA binding"/>
    <property type="evidence" value="ECO:0007669"/>
    <property type="project" value="UniProtKB-UniRule"/>
</dbReference>
<dbReference type="GO" id="GO:0003735">
    <property type="term" value="F:structural constituent of ribosome"/>
    <property type="evidence" value="ECO:0007669"/>
    <property type="project" value="InterPro"/>
</dbReference>
<dbReference type="GO" id="GO:0006412">
    <property type="term" value="P:translation"/>
    <property type="evidence" value="ECO:0007669"/>
    <property type="project" value="UniProtKB-UniRule"/>
</dbReference>
<dbReference type="CDD" id="cd00349">
    <property type="entry name" value="Ribosomal_L11"/>
    <property type="match status" value="1"/>
</dbReference>
<dbReference type="FunFam" id="1.10.10.250:FF:000001">
    <property type="entry name" value="50S ribosomal protein L11"/>
    <property type="match status" value="1"/>
</dbReference>
<dbReference type="FunFam" id="3.30.1550.10:FF:000001">
    <property type="entry name" value="50S ribosomal protein L11"/>
    <property type="match status" value="1"/>
</dbReference>
<dbReference type="Gene3D" id="1.10.10.250">
    <property type="entry name" value="Ribosomal protein L11, C-terminal domain"/>
    <property type="match status" value="1"/>
</dbReference>
<dbReference type="Gene3D" id="3.30.1550.10">
    <property type="entry name" value="Ribosomal protein L11/L12, N-terminal domain"/>
    <property type="match status" value="1"/>
</dbReference>
<dbReference type="HAMAP" id="MF_00736">
    <property type="entry name" value="Ribosomal_uL11"/>
    <property type="match status" value="1"/>
</dbReference>
<dbReference type="InterPro" id="IPR000911">
    <property type="entry name" value="Ribosomal_uL11"/>
</dbReference>
<dbReference type="InterPro" id="IPR006519">
    <property type="entry name" value="Ribosomal_uL11_bac-typ"/>
</dbReference>
<dbReference type="InterPro" id="IPR020783">
    <property type="entry name" value="Ribosomal_uL11_C"/>
</dbReference>
<dbReference type="InterPro" id="IPR036769">
    <property type="entry name" value="Ribosomal_uL11_C_sf"/>
</dbReference>
<dbReference type="InterPro" id="IPR020785">
    <property type="entry name" value="Ribosomal_uL11_CS"/>
</dbReference>
<dbReference type="InterPro" id="IPR020784">
    <property type="entry name" value="Ribosomal_uL11_N"/>
</dbReference>
<dbReference type="InterPro" id="IPR036796">
    <property type="entry name" value="Ribosomal_uL11_N_sf"/>
</dbReference>
<dbReference type="NCBIfam" id="TIGR01632">
    <property type="entry name" value="L11_bact"/>
    <property type="match status" value="1"/>
</dbReference>
<dbReference type="PANTHER" id="PTHR11661">
    <property type="entry name" value="60S RIBOSOMAL PROTEIN L12"/>
    <property type="match status" value="1"/>
</dbReference>
<dbReference type="PANTHER" id="PTHR11661:SF1">
    <property type="entry name" value="LARGE RIBOSOMAL SUBUNIT PROTEIN UL11M"/>
    <property type="match status" value="1"/>
</dbReference>
<dbReference type="Pfam" id="PF00298">
    <property type="entry name" value="Ribosomal_L11"/>
    <property type="match status" value="1"/>
</dbReference>
<dbReference type="Pfam" id="PF03946">
    <property type="entry name" value="Ribosomal_L11_N"/>
    <property type="match status" value="1"/>
</dbReference>
<dbReference type="SMART" id="SM00649">
    <property type="entry name" value="RL11"/>
    <property type="match status" value="1"/>
</dbReference>
<dbReference type="SUPFAM" id="SSF54747">
    <property type="entry name" value="Ribosomal L11/L12e N-terminal domain"/>
    <property type="match status" value="1"/>
</dbReference>
<dbReference type="SUPFAM" id="SSF46906">
    <property type="entry name" value="Ribosomal protein L11, C-terminal domain"/>
    <property type="match status" value="1"/>
</dbReference>
<dbReference type="PROSITE" id="PS00359">
    <property type="entry name" value="RIBOSOMAL_L11"/>
    <property type="match status" value="1"/>
</dbReference>
<proteinExistence type="inferred from homology"/>
<protein>
    <recommendedName>
        <fullName evidence="1">Large ribosomal subunit protein uL11</fullName>
    </recommendedName>
    <alternativeName>
        <fullName evidence="2">50S ribosomal protein L11</fullName>
    </alternativeName>
</protein>
<gene>
    <name evidence="1" type="primary">rplK</name>
    <name type="ordered locus">SaurJH1_0574</name>
</gene>
<feature type="chain" id="PRO_1000083407" description="Large ribosomal subunit protein uL11">
    <location>
        <begin position="1"/>
        <end position="140"/>
    </location>
</feature>
<accession>A6TZ14</accession>
<name>RL11_STAA2</name>
<keyword id="KW-0488">Methylation</keyword>
<keyword id="KW-0687">Ribonucleoprotein</keyword>
<keyword id="KW-0689">Ribosomal protein</keyword>
<keyword id="KW-0694">RNA-binding</keyword>
<keyword id="KW-0699">rRNA-binding</keyword>
<sequence>MAKKVDKVVKLQIPAGKANPAPPVGPALGQAGVNIMGFCKEFNARTQDQAGLIIPVEISVYEDRSFTFITKTPPAPVLLKKAAGIEKGSGEPNKTKVATVTKDQVREIANSKMQDLNAADEEAAMRIIEGTARSMGIVVE</sequence>